<comment type="function">
    <text evidence="1">Catalyzes the GTP-dependent phosphorylation of the 3'-hydroxyl group of dephosphocoenzyme A to form coenzyme A (CoA).</text>
</comment>
<comment type="catalytic activity">
    <reaction evidence="1">
        <text>3'-dephospho-CoA + GTP = GDP + CoA + H(+)</text>
        <dbReference type="Rhea" id="RHEA:61156"/>
        <dbReference type="ChEBI" id="CHEBI:15378"/>
        <dbReference type="ChEBI" id="CHEBI:37565"/>
        <dbReference type="ChEBI" id="CHEBI:57287"/>
        <dbReference type="ChEBI" id="CHEBI:57328"/>
        <dbReference type="ChEBI" id="CHEBI:58189"/>
        <dbReference type="EC" id="2.7.1.237"/>
    </reaction>
</comment>
<comment type="pathway">
    <text evidence="1">Cofactor biosynthesis; coenzyme A biosynthesis.</text>
</comment>
<comment type="similarity">
    <text evidence="1">Belongs to the GTP-dependent DPCK family.</text>
</comment>
<evidence type="ECO:0000255" key="1">
    <source>
        <dbReference type="HAMAP-Rule" id="MF_00590"/>
    </source>
</evidence>
<reference key="1">
    <citation type="journal article" date="2002" name="Proc. Natl. Acad. Sci. U.S.A.">
        <title>The complete genome of hyperthermophile Methanopyrus kandleri AV19 and monophyly of archaeal methanogens.</title>
        <authorList>
            <person name="Slesarev A.I."/>
            <person name="Mezhevaya K.V."/>
            <person name="Makarova K.S."/>
            <person name="Polushin N.N."/>
            <person name="Shcherbinina O.V."/>
            <person name="Shakhova V.V."/>
            <person name="Belova G.I."/>
            <person name="Aravind L."/>
            <person name="Natale D.A."/>
            <person name="Rogozin I.B."/>
            <person name="Tatusov R.L."/>
            <person name="Wolf Y.I."/>
            <person name="Stetter K.O."/>
            <person name="Malykh A.G."/>
            <person name="Koonin E.V."/>
            <person name="Kozyavkin S.A."/>
        </authorList>
    </citation>
    <scope>NUCLEOTIDE SEQUENCE [LARGE SCALE GENOMIC DNA]</scope>
    <source>
        <strain>AV19 / DSM 6324 / JCM 9639 / NBRC 100938</strain>
    </source>
</reference>
<name>DPCKG_METKA</name>
<dbReference type="EC" id="2.7.1.237" evidence="1"/>
<dbReference type="EMBL" id="AE009439">
    <property type="protein sequence ID" value="AAM02666.1"/>
    <property type="molecule type" value="Genomic_DNA"/>
</dbReference>
<dbReference type="SMR" id="Q8TVD9"/>
<dbReference type="FunCoup" id="Q8TVD9">
    <property type="interactions" value="5"/>
</dbReference>
<dbReference type="STRING" id="190192.MK1453"/>
<dbReference type="PaxDb" id="190192-MK1453"/>
<dbReference type="EnsemblBacteria" id="AAM02666">
    <property type="protein sequence ID" value="AAM02666"/>
    <property type="gene ID" value="MK1453"/>
</dbReference>
<dbReference type="KEGG" id="mka:MK1453"/>
<dbReference type="HOGENOM" id="CLU_120795_1_0_2"/>
<dbReference type="InParanoid" id="Q8TVD9"/>
<dbReference type="UniPathway" id="UPA00241"/>
<dbReference type="Proteomes" id="UP000001826">
    <property type="component" value="Chromosome"/>
</dbReference>
<dbReference type="GO" id="GO:0005525">
    <property type="term" value="F:GTP binding"/>
    <property type="evidence" value="ECO:0007669"/>
    <property type="project" value="UniProtKB-UniRule"/>
</dbReference>
<dbReference type="GO" id="GO:0016301">
    <property type="term" value="F:kinase activity"/>
    <property type="evidence" value="ECO:0007669"/>
    <property type="project" value="UniProtKB-UniRule"/>
</dbReference>
<dbReference type="GO" id="GO:0015937">
    <property type="term" value="P:coenzyme A biosynthetic process"/>
    <property type="evidence" value="ECO:0007669"/>
    <property type="project" value="UniProtKB-UniRule"/>
</dbReference>
<dbReference type="HAMAP" id="MF_00590">
    <property type="entry name" value="Dephospho_CoA_kinase_GTP_dep"/>
    <property type="match status" value="1"/>
</dbReference>
<dbReference type="InterPro" id="IPR007164">
    <property type="entry name" value="GTP-dep_dephospho-CoA_kin"/>
</dbReference>
<dbReference type="PANTHER" id="PTHR40732:SF1">
    <property type="entry name" value="GTP-DEPENDENT DEPHOSPHO-COA KINASE"/>
    <property type="match status" value="1"/>
</dbReference>
<dbReference type="PANTHER" id="PTHR40732">
    <property type="entry name" value="UPF0218 PROTEIN TK1697"/>
    <property type="match status" value="1"/>
</dbReference>
<dbReference type="Pfam" id="PF04019">
    <property type="entry name" value="DUF359"/>
    <property type="match status" value="1"/>
</dbReference>
<dbReference type="PIRSF" id="PIRSF006533">
    <property type="entry name" value="UCP006533"/>
    <property type="match status" value="1"/>
</dbReference>
<proteinExistence type="inferred from homology"/>
<gene>
    <name type="ordered locus">MK1453</name>
</gene>
<feature type="chain" id="PRO_0000137609" description="GTP-dependent dephospho-CoA kinase">
    <location>
        <begin position="1"/>
        <end position="191"/>
    </location>
</feature>
<feature type="binding site" evidence="1">
    <location>
        <position position="46"/>
    </location>
    <ligand>
        <name>GTP</name>
        <dbReference type="ChEBI" id="CHEBI:37565"/>
    </ligand>
</feature>
<feature type="binding site" evidence="1">
    <location>
        <position position="65"/>
    </location>
    <ligand>
        <name>GTP</name>
        <dbReference type="ChEBI" id="CHEBI:37565"/>
    </ligand>
</feature>
<feature type="binding site" evidence="1">
    <location>
        <position position="67"/>
    </location>
    <ligand>
        <name>GTP</name>
        <dbReference type="ChEBI" id="CHEBI:37565"/>
    </ligand>
</feature>
<feature type="binding site" evidence="1">
    <location>
        <position position="122"/>
    </location>
    <ligand>
        <name>GTP</name>
        <dbReference type="ChEBI" id="CHEBI:37565"/>
    </ligand>
</feature>
<keyword id="KW-0173">Coenzyme A biosynthesis</keyword>
<keyword id="KW-0342">GTP-binding</keyword>
<keyword id="KW-0418">Kinase</keyword>
<keyword id="KW-0547">Nucleotide-binding</keyword>
<keyword id="KW-1185">Reference proteome</keyword>
<keyword id="KW-0808">Transferase</keyword>
<organism>
    <name type="scientific">Methanopyrus kandleri (strain AV19 / DSM 6324 / JCM 9639 / NBRC 100938)</name>
    <dbReference type="NCBI Taxonomy" id="190192"/>
    <lineage>
        <taxon>Archaea</taxon>
        <taxon>Methanobacteriati</taxon>
        <taxon>Methanobacteriota</taxon>
        <taxon>Methanomada group</taxon>
        <taxon>Methanopyri</taxon>
        <taxon>Methanopyrales</taxon>
        <taxon>Methanopyraceae</taxon>
        <taxon>Methanopyrus</taxon>
    </lineage>
</organism>
<accession>Q8TVD9</accession>
<protein>
    <recommendedName>
        <fullName evidence="1">GTP-dependent dephospho-CoA kinase</fullName>
        <ecNumber evidence="1">2.7.1.237</ecNumber>
    </recommendedName>
    <alternativeName>
        <fullName evidence="1">Dephospho-coenzyme A kinase</fullName>
        <shortName evidence="1">DPCK</shortName>
    </alternativeName>
</protein>
<sequence>MTVVLRLPRELRPELRRPWGTLYPRPSIKTYRRLHEESEVLITVGDMTTRSFLRCSIRPDVAVVDRKMLRTVPVDPGNKFPVTLDVNNPPGTITREAWDTVRRGIDYALDGDATLIDVTGEEDLLAIPAILIAPENSIVCYGLPGEGMVAARVTQHLKDSVLRLLTRFRGYDEWKSRSWISGITPCCTAKR</sequence>